<keyword id="KW-1003">Cell membrane</keyword>
<keyword id="KW-0472">Membrane</keyword>
<keyword id="KW-0620">Polyamine biosynthesis</keyword>
<keyword id="KW-1185">Reference proteome</keyword>
<keyword id="KW-0745">Spermidine biosynthesis</keyword>
<keyword id="KW-0808">Transferase</keyword>
<keyword id="KW-0812">Transmembrane</keyword>
<keyword id="KW-1133">Transmembrane helix</keyword>
<protein>
    <recommendedName>
        <fullName evidence="1">Polyamine aminopropyltransferase</fullName>
    </recommendedName>
    <alternativeName>
        <fullName evidence="1">Putrescine aminopropyltransferase</fullName>
        <shortName evidence="1">PAPT</shortName>
    </alternativeName>
    <alternativeName>
        <fullName evidence="1">Spermidine synthase</fullName>
        <shortName evidence="1">SPDS</shortName>
        <shortName evidence="1">SPDSY</shortName>
        <ecNumber evidence="1">2.5.1.16</ecNumber>
    </alternativeName>
</protein>
<name>SPEE_COREF</name>
<evidence type="ECO:0000255" key="1">
    <source>
        <dbReference type="HAMAP-Rule" id="MF_00198"/>
    </source>
</evidence>
<dbReference type="EC" id="2.5.1.16" evidence="1"/>
<dbReference type="EMBL" id="BA000035">
    <property type="protein sequence ID" value="BAC19357.1"/>
    <property type="molecule type" value="Genomic_DNA"/>
</dbReference>
<dbReference type="RefSeq" id="WP_006769088.1">
    <property type="nucleotide sequence ID" value="NC_004369.1"/>
</dbReference>
<dbReference type="SMR" id="Q8FMF7"/>
<dbReference type="STRING" id="196164.gene:10742994"/>
<dbReference type="KEGG" id="cef:CE2547"/>
<dbReference type="eggNOG" id="COG4262">
    <property type="taxonomic scope" value="Bacteria"/>
</dbReference>
<dbReference type="HOGENOM" id="CLU_034289_1_0_11"/>
<dbReference type="OrthoDB" id="9793120at2"/>
<dbReference type="UniPathway" id="UPA00248">
    <property type="reaction ID" value="UER00314"/>
</dbReference>
<dbReference type="Proteomes" id="UP000001409">
    <property type="component" value="Chromosome"/>
</dbReference>
<dbReference type="GO" id="GO:0005886">
    <property type="term" value="C:plasma membrane"/>
    <property type="evidence" value="ECO:0007669"/>
    <property type="project" value="UniProtKB-SubCell"/>
</dbReference>
<dbReference type="GO" id="GO:0004766">
    <property type="term" value="F:spermidine synthase activity"/>
    <property type="evidence" value="ECO:0007669"/>
    <property type="project" value="UniProtKB-UniRule"/>
</dbReference>
<dbReference type="GO" id="GO:0010487">
    <property type="term" value="F:thermospermine synthase activity"/>
    <property type="evidence" value="ECO:0007669"/>
    <property type="project" value="UniProtKB-ARBA"/>
</dbReference>
<dbReference type="GO" id="GO:0008295">
    <property type="term" value="P:spermidine biosynthetic process"/>
    <property type="evidence" value="ECO:0007669"/>
    <property type="project" value="UniProtKB-UniRule"/>
</dbReference>
<dbReference type="CDD" id="cd02440">
    <property type="entry name" value="AdoMet_MTases"/>
    <property type="match status" value="1"/>
</dbReference>
<dbReference type="Gene3D" id="3.40.50.150">
    <property type="entry name" value="Vaccinia Virus protein VP39"/>
    <property type="match status" value="1"/>
</dbReference>
<dbReference type="HAMAP" id="MF_00198">
    <property type="entry name" value="Spermidine_synth"/>
    <property type="match status" value="1"/>
</dbReference>
<dbReference type="InterPro" id="IPR036259">
    <property type="entry name" value="MFS_trans_sf"/>
</dbReference>
<dbReference type="InterPro" id="IPR030374">
    <property type="entry name" value="PABS"/>
</dbReference>
<dbReference type="InterPro" id="IPR030373">
    <property type="entry name" value="PABS_CS"/>
</dbReference>
<dbReference type="InterPro" id="IPR029063">
    <property type="entry name" value="SAM-dependent_MTases_sf"/>
</dbReference>
<dbReference type="InterPro" id="IPR001045">
    <property type="entry name" value="Spermi_synthase"/>
</dbReference>
<dbReference type="NCBIfam" id="NF037959">
    <property type="entry name" value="MFS_SpdSyn"/>
    <property type="match status" value="1"/>
</dbReference>
<dbReference type="NCBIfam" id="NF002956">
    <property type="entry name" value="PRK03612.1"/>
    <property type="match status" value="1"/>
</dbReference>
<dbReference type="PANTHER" id="PTHR43317">
    <property type="entry name" value="THERMOSPERMINE SYNTHASE ACAULIS5"/>
    <property type="match status" value="1"/>
</dbReference>
<dbReference type="PANTHER" id="PTHR43317:SF1">
    <property type="entry name" value="THERMOSPERMINE SYNTHASE ACAULIS5"/>
    <property type="match status" value="1"/>
</dbReference>
<dbReference type="Pfam" id="PF01564">
    <property type="entry name" value="Spermine_synth"/>
    <property type="match status" value="1"/>
</dbReference>
<dbReference type="SUPFAM" id="SSF103473">
    <property type="entry name" value="MFS general substrate transporter"/>
    <property type="match status" value="1"/>
</dbReference>
<dbReference type="SUPFAM" id="SSF53335">
    <property type="entry name" value="S-adenosyl-L-methionine-dependent methyltransferases"/>
    <property type="match status" value="1"/>
</dbReference>
<dbReference type="PROSITE" id="PS01330">
    <property type="entry name" value="PABS_1"/>
    <property type="match status" value="1"/>
</dbReference>
<dbReference type="PROSITE" id="PS51006">
    <property type="entry name" value="PABS_2"/>
    <property type="match status" value="1"/>
</dbReference>
<proteinExistence type="inferred from homology"/>
<organism>
    <name type="scientific">Corynebacterium efficiens (strain DSM 44549 / YS-314 / AJ 12310 / JCM 11189 / NBRC 100395)</name>
    <dbReference type="NCBI Taxonomy" id="196164"/>
    <lineage>
        <taxon>Bacteria</taxon>
        <taxon>Bacillati</taxon>
        <taxon>Actinomycetota</taxon>
        <taxon>Actinomycetes</taxon>
        <taxon>Mycobacteriales</taxon>
        <taxon>Corynebacteriaceae</taxon>
        <taxon>Corynebacterium</taxon>
    </lineage>
</organism>
<reference key="1">
    <citation type="journal article" date="2003" name="Genome Res.">
        <title>Comparative complete genome sequence analysis of the amino acid replacements responsible for the thermostability of Corynebacterium efficiens.</title>
        <authorList>
            <person name="Nishio Y."/>
            <person name="Nakamura Y."/>
            <person name="Kawarabayasi Y."/>
            <person name="Usuda Y."/>
            <person name="Kimura E."/>
            <person name="Sugimoto S."/>
            <person name="Matsui K."/>
            <person name="Yamagishi A."/>
            <person name="Kikuchi H."/>
            <person name="Ikeo K."/>
            <person name="Gojobori T."/>
        </authorList>
    </citation>
    <scope>NUCLEOTIDE SEQUENCE [LARGE SCALE GENOMIC DNA]</scope>
    <source>
        <strain>DSM 44549 / YS-314 / AJ 12310 / JCM 11189 / NBRC 100395</strain>
    </source>
</reference>
<feature type="chain" id="PRO_0000156478" description="Polyamine aminopropyltransferase">
    <location>
        <begin position="1"/>
        <end position="519"/>
    </location>
</feature>
<feature type="transmembrane region" description="Helical" evidence="1">
    <location>
        <begin position="17"/>
        <end position="37"/>
    </location>
</feature>
<feature type="transmembrane region" description="Helical" evidence="1">
    <location>
        <begin position="53"/>
        <end position="73"/>
    </location>
</feature>
<feature type="transmembrane region" description="Helical" evidence="1">
    <location>
        <begin position="86"/>
        <end position="106"/>
    </location>
</feature>
<feature type="transmembrane region" description="Helical" evidence="1">
    <location>
        <begin position="109"/>
        <end position="129"/>
    </location>
</feature>
<feature type="transmembrane region" description="Helical" evidence="1">
    <location>
        <begin position="158"/>
        <end position="178"/>
    </location>
</feature>
<feature type="transmembrane region" description="Helical" evidence="1">
    <location>
        <begin position="180"/>
        <end position="200"/>
    </location>
</feature>
<feature type="transmembrane region" description="Helical" evidence="1">
    <location>
        <begin position="208"/>
        <end position="228"/>
    </location>
</feature>
<feature type="domain" description="PABS" evidence="1">
    <location>
        <begin position="225"/>
        <end position="459"/>
    </location>
</feature>
<feature type="region of interest" description="Spermidine synthase">
    <location>
        <begin position="200"/>
        <end position="463"/>
    </location>
</feature>
<feature type="active site" description="Proton acceptor" evidence="1">
    <location>
        <position position="379"/>
    </location>
</feature>
<feature type="binding site" evidence="1">
    <location>
        <position position="255"/>
    </location>
    <ligand>
        <name>S-methyl-5'-thioadenosine</name>
        <dbReference type="ChEBI" id="CHEBI:17509"/>
    </ligand>
</feature>
<feature type="binding site" evidence="1">
    <location>
        <position position="307"/>
    </location>
    <ligand>
        <name>spermidine</name>
        <dbReference type="ChEBI" id="CHEBI:57834"/>
    </ligand>
</feature>
<feature type="binding site" evidence="1">
    <location>
        <position position="326"/>
    </location>
    <ligand>
        <name>S-methyl-5'-thioadenosine</name>
        <dbReference type="ChEBI" id="CHEBI:17509"/>
    </ligand>
</feature>
<feature type="binding site" evidence="1">
    <location>
        <begin position="358"/>
        <end position="359"/>
    </location>
    <ligand>
        <name>S-methyl-5'-thioadenosine</name>
        <dbReference type="ChEBI" id="CHEBI:17509"/>
    </ligand>
</feature>
<sequence length="519" mass="55796">MSGLEQPAELSRVWRWLLLVSVAICAASGLVYELALVSLSASLNGGGIVETSLIVAGYVAALGVGAILVKPFLRWPAQTFLAVETLLGLIGGLSALVLYMTFAVVGQNLWMLVLATALIGILVGAELPLLMTMIQRGRLADARTTGSLVATLNAADYLGALLGGLAWPFILLPWLGMMRGAAAAGMINLLAALFVGCVLLRHLLPRAQFIRAVVALLVAIAVLGTVLVRSDGIVATARQQLYRDPVIYAHQSDYQDIVVTQRGADRRLYLNGGLQYSTRDEHRYTESLVYPGLSDSARTALIIGGGDGLAARELLRFPDMRITQVELDPEVIEVANTILLPDNGGAMQDPRVTVITDDAFTWLRAGGDGGQRYDAIFVDLPDPNNDTMARLYSQEFYTLALARLNDGGRMVVQSSSAYTTPDVFWRIASTMSAAGCGAVIPYHVHVPTFGDWGFQLCGPEGTELGLRGDTPSLRFLTDEVLAAAGVFGADNQPRELEPSTLDHPRVVEDLRRGYRQAGE</sequence>
<gene>
    <name evidence="1" type="primary">speE</name>
    <name type="ordered locus">CE2547</name>
</gene>
<comment type="function">
    <text evidence="1">Catalyzes the irreversible transfer of a propylamine group from the amino donor S-adenosylmethioninamine (decarboxy-AdoMet) to putrescine (1,4-diaminobutane) to yield spermidine.</text>
</comment>
<comment type="catalytic activity">
    <reaction evidence="1">
        <text>S-adenosyl 3-(methylsulfanyl)propylamine + putrescine = S-methyl-5'-thioadenosine + spermidine + H(+)</text>
        <dbReference type="Rhea" id="RHEA:12721"/>
        <dbReference type="ChEBI" id="CHEBI:15378"/>
        <dbReference type="ChEBI" id="CHEBI:17509"/>
        <dbReference type="ChEBI" id="CHEBI:57443"/>
        <dbReference type="ChEBI" id="CHEBI:57834"/>
        <dbReference type="ChEBI" id="CHEBI:326268"/>
        <dbReference type="EC" id="2.5.1.16"/>
    </reaction>
</comment>
<comment type="pathway">
    <text evidence="1">Amine and polyamine biosynthesis; spermidine biosynthesis; spermidine from putrescine: step 1/1.</text>
</comment>
<comment type="subunit">
    <text evidence="1">Homodimer or homotetramer.</text>
</comment>
<comment type="subcellular location">
    <subcellularLocation>
        <location evidence="1">Cell membrane</location>
        <topology evidence="1">Multi-pass membrane protein</topology>
    </subcellularLocation>
</comment>
<comment type="similarity">
    <text evidence="1">Belongs to the spermidine/spermine synthase family.</text>
</comment>
<accession>Q8FMF7</accession>